<evidence type="ECO:0000255" key="1">
    <source>
        <dbReference type="HAMAP-Rule" id="MF_01294"/>
    </source>
</evidence>
<evidence type="ECO:0000305" key="2"/>
<organism>
    <name type="scientific">Salmonella heidelberg (strain SL476)</name>
    <dbReference type="NCBI Taxonomy" id="454169"/>
    <lineage>
        <taxon>Bacteria</taxon>
        <taxon>Pseudomonadati</taxon>
        <taxon>Pseudomonadota</taxon>
        <taxon>Gammaproteobacteria</taxon>
        <taxon>Enterobacterales</taxon>
        <taxon>Enterobacteriaceae</taxon>
        <taxon>Salmonella</taxon>
    </lineage>
</organism>
<dbReference type="EC" id="4.1.2.40" evidence="1"/>
<dbReference type="EMBL" id="CP001120">
    <property type="protein sequence ID" value="ACF67959.1"/>
    <property type="status" value="ALT_INIT"/>
    <property type="molecule type" value="Genomic_DNA"/>
</dbReference>
<dbReference type="RefSeq" id="WP_000469979.1">
    <property type="nucleotide sequence ID" value="NC_011083.1"/>
</dbReference>
<dbReference type="SMR" id="B4TIX9"/>
<dbReference type="KEGG" id="seh:SeHA_C3551"/>
<dbReference type="HOGENOM" id="CLU_040088_0_1_6"/>
<dbReference type="UniPathway" id="UPA00704">
    <property type="reaction ID" value="UER00716"/>
</dbReference>
<dbReference type="Proteomes" id="UP000001866">
    <property type="component" value="Chromosome"/>
</dbReference>
<dbReference type="GO" id="GO:0005829">
    <property type="term" value="C:cytosol"/>
    <property type="evidence" value="ECO:0007669"/>
    <property type="project" value="TreeGrafter"/>
</dbReference>
<dbReference type="GO" id="GO:0009025">
    <property type="term" value="F:tagatose-bisphosphate aldolase activity"/>
    <property type="evidence" value="ECO:0007669"/>
    <property type="project" value="UniProtKB-UniRule"/>
</dbReference>
<dbReference type="GO" id="GO:0008270">
    <property type="term" value="F:zinc ion binding"/>
    <property type="evidence" value="ECO:0007669"/>
    <property type="project" value="UniProtKB-UniRule"/>
</dbReference>
<dbReference type="GO" id="GO:2001059">
    <property type="term" value="P:D-tagatose 6-phosphate catabolic process"/>
    <property type="evidence" value="ECO:0007669"/>
    <property type="project" value="UniProtKB-UniRule"/>
</dbReference>
<dbReference type="GO" id="GO:0019404">
    <property type="term" value="P:galactitol catabolic process"/>
    <property type="evidence" value="ECO:0007669"/>
    <property type="project" value="InterPro"/>
</dbReference>
<dbReference type="CDD" id="cd00947">
    <property type="entry name" value="TBP_aldolase_IIB"/>
    <property type="match status" value="1"/>
</dbReference>
<dbReference type="FunFam" id="3.20.20.70:FF:000043">
    <property type="entry name" value="D-tagatose-1,6-bisphosphate aldolase subunit GatY"/>
    <property type="match status" value="1"/>
</dbReference>
<dbReference type="Gene3D" id="3.20.20.70">
    <property type="entry name" value="Aldolase class I"/>
    <property type="match status" value="1"/>
</dbReference>
<dbReference type="HAMAP" id="MF_01294">
    <property type="entry name" value="TagBP_aldolase_GatY"/>
    <property type="match status" value="1"/>
</dbReference>
<dbReference type="InterPro" id="IPR013785">
    <property type="entry name" value="Aldolase_TIM"/>
</dbReference>
<dbReference type="InterPro" id="IPR050246">
    <property type="entry name" value="Class_II_FBP_aldolase"/>
</dbReference>
<dbReference type="InterPro" id="IPR000771">
    <property type="entry name" value="FBA_II"/>
</dbReference>
<dbReference type="InterPro" id="IPR011288">
    <property type="entry name" value="TagBP_ald_KbaY/GatY"/>
</dbReference>
<dbReference type="InterPro" id="IPR023955">
    <property type="entry name" value="TagBP_aldolase_GatY"/>
</dbReference>
<dbReference type="NCBIfam" id="TIGR00167">
    <property type="entry name" value="cbbA"/>
    <property type="match status" value="1"/>
</dbReference>
<dbReference type="NCBIfam" id="NF006626">
    <property type="entry name" value="PRK09195.1"/>
    <property type="match status" value="1"/>
</dbReference>
<dbReference type="NCBIfam" id="NF009374">
    <property type="entry name" value="PRK12737.1"/>
    <property type="match status" value="1"/>
</dbReference>
<dbReference type="NCBIfam" id="TIGR01858">
    <property type="entry name" value="tag_bisphos_ald"/>
    <property type="match status" value="1"/>
</dbReference>
<dbReference type="PANTHER" id="PTHR30304">
    <property type="entry name" value="D-TAGATOSE-1,6-BISPHOSPHATE ALDOLASE"/>
    <property type="match status" value="1"/>
</dbReference>
<dbReference type="PANTHER" id="PTHR30304:SF0">
    <property type="entry name" value="D-TAGATOSE-1,6-BISPHOSPHATE ALDOLASE SUBUNIT GATY-RELATED"/>
    <property type="match status" value="1"/>
</dbReference>
<dbReference type="Pfam" id="PF01116">
    <property type="entry name" value="F_bP_aldolase"/>
    <property type="match status" value="1"/>
</dbReference>
<dbReference type="PIRSF" id="PIRSF001359">
    <property type="entry name" value="F_bP_aldolase_II"/>
    <property type="match status" value="1"/>
</dbReference>
<dbReference type="SUPFAM" id="SSF51569">
    <property type="entry name" value="Aldolase"/>
    <property type="match status" value="1"/>
</dbReference>
<dbReference type="PROSITE" id="PS00806">
    <property type="entry name" value="ALDOLASE_CLASS_II_2"/>
    <property type="match status" value="1"/>
</dbReference>
<reference key="1">
    <citation type="journal article" date="2011" name="J. Bacteriol.">
        <title>Comparative genomics of 28 Salmonella enterica isolates: evidence for CRISPR-mediated adaptive sublineage evolution.</title>
        <authorList>
            <person name="Fricke W.F."/>
            <person name="Mammel M.K."/>
            <person name="McDermott P.F."/>
            <person name="Tartera C."/>
            <person name="White D.G."/>
            <person name="Leclerc J.E."/>
            <person name="Ravel J."/>
            <person name="Cebula T.A."/>
        </authorList>
    </citation>
    <scope>NUCLEOTIDE SEQUENCE [LARGE SCALE GENOMIC DNA]</scope>
    <source>
        <strain>SL476</strain>
    </source>
</reference>
<comment type="function">
    <text evidence="1">Catalytic subunit of the tagatose-1,6-bisphosphate aldolase GatYZ, which catalyzes the reversible aldol condensation of dihydroxyacetone phosphate (DHAP or glycerone-phosphate) with glyceraldehyde 3-phosphate (G3P) to produce tagatose 1,6-bisphosphate (TBP). Requires GatZ subunit for full activity and stability. Is involved in the catabolism of galactitol.</text>
</comment>
<comment type="catalytic activity">
    <reaction evidence="1">
        <text>D-tagatofuranose 1,6-bisphosphate = D-glyceraldehyde 3-phosphate + dihydroxyacetone phosphate</text>
        <dbReference type="Rhea" id="RHEA:22948"/>
        <dbReference type="ChEBI" id="CHEBI:57642"/>
        <dbReference type="ChEBI" id="CHEBI:58694"/>
        <dbReference type="ChEBI" id="CHEBI:59776"/>
        <dbReference type="EC" id="4.1.2.40"/>
    </reaction>
</comment>
<comment type="cofactor">
    <cofactor evidence="1">
        <name>Zn(2+)</name>
        <dbReference type="ChEBI" id="CHEBI:29105"/>
    </cofactor>
    <text evidence="1">Binds 1 zinc ion per subunit.</text>
</comment>
<comment type="pathway">
    <text evidence="1">Carbohydrate metabolism; D-tagatose 6-phosphate degradation; D-glyceraldehyde 3-phosphate and glycerone phosphate from D-tagatose 6-phosphate: step 2/2.</text>
</comment>
<comment type="subunit">
    <text evidence="1">Forms a complex with GatZ.</text>
</comment>
<comment type="similarity">
    <text evidence="1">Belongs to the class II fructose-bisphosphate aldolase family. TagBP aldolase GatY subfamily.</text>
</comment>
<comment type="sequence caution" evidence="2">
    <conflict type="erroneous initiation">
        <sequence resource="EMBL-CDS" id="ACF67959"/>
    </conflict>
</comment>
<name>GATY_SALHS</name>
<keyword id="KW-0298">Galactitol metabolism</keyword>
<keyword id="KW-0456">Lyase</keyword>
<keyword id="KW-0479">Metal-binding</keyword>
<keyword id="KW-0862">Zinc</keyword>
<accession>B4TIX9</accession>
<feature type="chain" id="PRO_0000355344" description="D-tagatose-1,6-bisphosphate aldolase subunit GatY">
    <location>
        <begin position="1"/>
        <end position="284"/>
    </location>
</feature>
<feature type="active site" description="Proton donor" evidence="1">
    <location>
        <position position="82"/>
    </location>
</feature>
<feature type="binding site" evidence="1">
    <location>
        <position position="83"/>
    </location>
    <ligand>
        <name>Zn(2+)</name>
        <dbReference type="ChEBI" id="CHEBI:29105"/>
        <note>catalytic</note>
    </ligand>
</feature>
<feature type="binding site" evidence="1">
    <location>
        <position position="180"/>
    </location>
    <ligand>
        <name>Zn(2+)</name>
        <dbReference type="ChEBI" id="CHEBI:29105"/>
        <note>catalytic</note>
    </ligand>
</feature>
<feature type="binding site" evidence="1">
    <location>
        <position position="181"/>
    </location>
    <ligand>
        <name>dihydroxyacetone phosphate</name>
        <dbReference type="ChEBI" id="CHEBI:57642"/>
    </ligand>
</feature>
<feature type="binding site" evidence="1">
    <location>
        <position position="208"/>
    </location>
    <ligand>
        <name>Zn(2+)</name>
        <dbReference type="ChEBI" id="CHEBI:29105"/>
        <note>catalytic</note>
    </ligand>
</feature>
<feature type="binding site" evidence="1">
    <location>
        <begin position="209"/>
        <end position="211"/>
    </location>
    <ligand>
        <name>dihydroxyacetone phosphate</name>
        <dbReference type="ChEBI" id="CHEBI:57642"/>
    </ligand>
</feature>
<feature type="binding site" evidence="1">
    <location>
        <begin position="230"/>
        <end position="233"/>
    </location>
    <ligand>
        <name>dihydroxyacetone phosphate</name>
        <dbReference type="ChEBI" id="CHEBI:57642"/>
    </ligand>
</feature>
<proteinExistence type="inferred from homology"/>
<sequence>MFIISGRTMLKKAQQEGYAVPAFNIHNLETLQVVVETAAELRSPLIVAGTPGTFSYAGVGNIVAIAAELAKSWNHPLAVHLDHHEKLADIKMKVAAGVRSVMIDGSHFPFADNIALVKSVVDYCHRYDVSVEAELGRLGGQEDDLIVDGKDALYTHPEQAREFVEKTGIDSLAIAIGTAHGLYTAEPKLDFERLTEIRQRVDVPLVLHGASGLPTRDITRAISLGICKVNVATELKIAFSGALKNYLTQHAEASDPRHYMIPAKAAMKEVVRKVIADCGCEGKL</sequence>
<gene>
    <name evidence="1" type="primary">gatY</name>
    <name type="ordered locus">SeHA_C3551</name>
</gene>
<protein>
    <recommendedName>
        <fullName evidence="1">D-tagatose-1,6-bisphosphate aldolase subunit GatY</fullName>
        <shortName evidence="1">TBPA</shortName>
        <shortName evidence="1">TagBP aldolase</shortName>
        <ecNumber evidence="1">4.1.2.40</ecNumber>
    </recommendedName>
    <alternativeName>
        <fullName evidence="1">D-tagatose-bisphosphate aldolase class II</fullName>
    </alternativeName>
    <alternativeName>
        <fullName evidence="1">Tagatose-bisphosphate aldolase</fullName>
    </alternativeName>
</protein>